<protein>
    <recommendedName>
        <fullName evidence="1">Protein-export protein SecB</fullName>
    </recommendedName>
</protein>
<feature type="chain" id="PRO_1000062451" description="Protein-export protein SecB">
    <location>
        <begin position="1"/>
        <end position="158"/>
    </location>
</feature>
<sequence length="158" mass="17573">MQPKIRVRGQYIKDLSFENPNAPKVFLMMSKTPPEINISVNVSSAALPVKPPEGEQASVALYEVALQINIESVVEKLPAFICEIKYCGVFSIEEDEELEQEQVKRALLINAPSILFPFVREVIAKVTSSAGFPPLMLEVIDFSAMYEKQLAENADGEK</sequence>
<reference key="1">
    <citation type="journal article" date="2006" name="PLoS Genet.">
        <title>Comparative genomics of emerging human ehrlichiosis agents.</title>
        <authorList>
            <person name="Dunning Hotopp J.C."/>
            <person name="Lin M."/>
            <person name="Madupu R."/>
            <person name="Crabtree J."/>
            <person name="Angiuoli S.V."/>
            <person name="Eisen J.A."/>
            <person name="Seshadri R."/>
            <person name="Ren Q."/>
            <person name="Wu M."/>
            <person name="Utterback T.R."/>
            <person name="Smith S."/>
            <person name="Lewis M."/>
            <person name="Khouri H."/>
            <person name="Zhang C."/>
            <person name="Niu H."/>
            <person name="Lin Q."/>
            <person name="Ohashi N."/>
            <person name="Zhi N."/>
            <person name="Nelson W.C."/>
            <person name="Brinkac L.M."/>
            <person name="Dodson R.J."/>
            <person name="Rosovitz M.J."/>
            <person name="Sundaram J.P."/>
            <person name="Daugherty S.C."/>
            <person name="Davidsen T."/>
            <person name="Durkin A.S."/>
            <person name="Gwinn M.L."/>
            <person name="Haft D.H."/>
            <person name="Selengut J.D."/>
            <person name="Sullivan S.A."/>
            <person name="Zafar N."/>
            <person name="Zhou L."/>
            <person name="Benahmed F."/>
            <person name="Forberger H."/>
            <person name="Halpin R."/>
            <person name="Mulligan S."/>
            <person name="Robinson J."/>
            <person name="White O."/>
            <person name="Rikihisa Y."/>
            <person name="Tettelin H."/>
        </authorList>
    </citation>
    <scope>NUCLEOTIDE SEQUENCE [LARGE SCALE GENOMIC DNA]</scope>
    <source>
        <strain>HZ</strain>
    </source>
</reference>
<organism>
    <name type="scientific">Anaplasma phagocytophilum (strain HZ)</name>
    <dbReference type="NCBI Taxonomy" id="212042"/>
    <lineage>
        <taxon>Bacteria</taxon>
        <taxon>Pseudomonadati</taxon>
        <taxon>Pseudomonadota</taxon>
        <taxon>Alphaproteobacteria</taxon>
        <taxon>Rickettsiales</taxon>
        <taxon>Anaplasmataceae</taxon>
        <taxon>Anaplasma</taxon>
        <taxon>phagocytophilum group</taxon>
    </lineage>
</organism>
<proteinExistence type="inferred from homology"/>
<keyword id="KW-0143">Chaperone</keyword>
<keyword id="KW-0963">Cytoplasm</keyword>
<keyword id="KW-0653">Protein transport</keyword>
<keyword id="KW-0811">Translocation</keyword>
<keyword id="KW-0813">Transport</keyword>
<gene>
    <name evidence="1" type="primary">secB</name>
    <name type="ordered locus">APH_0097</name>
</gene>
<accession>Q2GLM6</accession>
<comment type="function">
    <text evidence="1">One of the proteins required for the normal export of preproteins out of the cell cytoplasm. It is a molecular chaperone that binds to a subset of precursor proteins, maintaining them in a translocation-competent state. It also specifically binds to its receptor SecA.</text>
</comment>
<comment type="subunit">
    <text evidence="1">Homotetramer, a dimer of dimers. One homotetramer interacts with 1 SecA dimer.</text>
</comment>
<comment type="subcellular location">
    <subcellularLocation>
        <location evidence="1">Cytoplasm</location>
    </subcellularLocation>
</comment>
<comment type="similarity">
    <text evidence="1">Belongs to the SecB family.</text>
</comment>
<evidence type="ECO:0000255" key="1">
    <source>
        <dbReference type="HAMAP-Rule" id="MF_00821"/>
    </source>
</evidence>
<name>SECB_ANAPZ</name>
<dbReference type="EMBL" id="CP000235">
    <property type="protein sequence ID" value="ABD43515.1"/>
    <property type="molecule type" value="Genomic_DNA"/>
</dbReference>
<dbReference type="RefSeq" id="WP_011450251.1">
    <property type="nucleotide sequence ID" value="NC_007797.1"/>
</dbReference>
<dbReference type="SMR" id="Q2GLM6"/>
<dbReference type="STRING" id="212042.APH_0097"/>
<dbReference type="PaxDb" id="212042-APH_0097"/>
<dbReference type="EnsemblBacteria" id="ABD43515">
    <property type="protein sequence ID" value="ABD43515"/>
    <property type="gene ID" value="APH_0097"/>
</dbReference>
<dbReference type="GeneID" id="92747654"/>
<dbReference type="KEGG" id="aph:APH_0097"/>
<dbReference type="eggNOG" id="COG1952">
    <property type="taxonomic scope" value="Bacteria"/>
</dbReference>
<dbReference type="HOGENOM" id="CLU_111574_0_0_5"/>
<dbReference type="Proteomes" id="UP000001943">
    <property type="component" value="Chromosome"/>
</dbReference>
<dbReference type="GO" id="GO:0005737">
    <property type="term" value="C:cytoplasm"/>
    <property type="evidence" value="ECO:0007669"/>
    <property type="project" value="UniProtKB-SubCell"/>
</dbReference>
<dbReference type="GO" id="GO:0051082">
    <property type="term" value="F:unfolded protein binding"/>
    <property type="evidence" value="ECO:0007669"/>
    <property type="project" value="InterPro"/>
</dbReference>
<dbReference type="GO" id="GO:0006457">
    <property type="term" value="P:protein folding"/>
    <property type="evidence" value="ECO:0007669"/>
    <property type="project" value="UniProtKB-UniRule"/>
</dbReference>
<dbReference type="GO" id="GO:0051262">
    <property type="term" value="P:protein tetramerization"/>
    <property type="evidence" value="ECO:0007669"/>
    <property type="project" value="InterPro"/>
</dbReference>
<dbReference type="GO" id="GO:0015031">
    <property type="term" value="P:protein transport"/>
    <property type="evidence" value="ECO:0007669"/>
    <property type="project" value="UniProtKB-UniRule"/>
</dbReference>
<dbReference type="Gene3D" id="3.10.420.10">
    <property type="entry name" value="SecB-like"/>
    <property type="match status" value="1"/>
</dbReference>
<dbReference type="HAMAP" id="MF_00821">
    <property type="entry name" value="SecB"/>
    <property type="match status" value="1"/>
</dbReference>
<dbReference type="InterPro" id="IPR003708">
    <property type="entry name" value="SecB"/>
</dbReference>
<dbReference type="InterPro" id="IPR035958">
    <property type="entry name" value="SecB-like_sf"/>
</dbReference>
<dbReference type="NCBIfam" id="NF004392">
    <property type="entry name" value="PRK05751.1-3"/>
    <property type="match status" value="1"/>
</dbReference>
<dbReference type="NCBIfam" id="TIGR00809">
    <property type="entry name" value="secB"/>
    <property type="match status" value="1"/>
</dbReference>
<dbReference type="PANTHER" id="PTHR36918">
    <property type="match status" value="1"/>
</dbReference>
<dbReference type="PANTHER" id="PTHR36918:SF1">
    <property type="entry name" value="PROTEIN-EXPORT PROTEIN SECB"/>
    <property type="match status" value="1"/>
</dbReference>
<dbReference type="Pfam" id="PF02556">
    <property type="entry name" value="SecB"/>
    <property type="match status" value="1"/>
</dbReference>
<dbReference type="SUPFAM" id="SSF54611">
    <property type="entry name" value="SecB-like"/>
    <property type="match status" value="1"/>
</dbReference>